<dbReference type="EC" id="3.6.1.27" evidence="1"/>
<dbReference type="EMBL" id="CP000920">
    <property type="protein sequence ID" value="ACO21479.1"/>
    <property type="molecule type" value="Genomic_DNA"/>
</dbReference>
<dbReference type="RefSeq" id="WP_000280773.1">
    <property type="nucleotide sequence ID" value="NC_012467.1"/>
</dbReference>
<dbReference type="SMR" id="C1CIV9"/>
<dbReference type="KEGG" id="spp:SPP_0489"/>
<dbReference type="HOGENOM" id="CLU_060296_2_0_9"/>
<dbReference type="GO" id="GO:0005886">
    <property type="term" value="C:plasma membrane"/>
    <property type="evidence" value="ECO:0007669"/>
    <property type="project" value="UniProtKB-SubCell"/>
</dbReference>
<dbReference type="GO" id="GO:0050380">
    <property type="term" value="F:undecaprenyl-diphosphatase activity"/>
    <property type="evidence" value="ECO:0007669"/>
    <property type="project" value="UniProtKB-UniRule"/>
</dbReference>
<dbReference type="GO" id="GO:0071555">
    <property type="term" value="P:cell wall organization"/>
    <property type="evidence" value="ECO:0007669"/>
    <property type="project" value="UniProtKB-KW"/>
</dbReference>
<dbReference type="GO" id="GO:0009252">
    <property type="term" value="P:peptidoglycan biosynthetic process"/>
    <property type="evidence" value="ECO:0007669"/>
    <property type="project" value="UniProtKB-KW"/>
</dbReference>
<dbReference type="GO" id="GO:0008360">
    <property type="term" value="P:regulation of cell shape"/>
    <property type="evidence" value="ECO:0007669"/>
    <property type="project" value="UniProtKB-KW"/>
</dbReference>
<dbReference type="GO" id="GO:0046677">
    <property type="term" value="P:response to antibiotic"/>
    <property type="evidence" value="ECO:0007669"/>
    <property type="project" value="UniProtKB-UniRule"/>
</dbReference>
<dbReference type="HAMAP" id="MF_01006">
    <property type="entry name" value="Undec_diphosphatase"/>
    <property type="match status" value="1"/>
</dbReference>
<dbReference type="InterPro" id="IPR003824">
    <property type="entry name" value="UppP"/>
</dbReference>
<dbReference type="NCBIfam" id="NF001391">
    <property type="entry name" value="PRK00281.1-5"/>
    <property type="match status" value="1"/>
</dbReference>
<dbReference type="PANTHER" id="PTHR30622">
    <property type="entry name" value="UNDECAPRENYL-DIPHOSPHATASE"/>
    <property type="match status" value="1"/>
</dbReference>
<dbReference type="PANTHER" id="PTHR30622:SF3">
    <property type="entry name" value="UNDECAPRENYL-DIPHOSPHATASE"/>
    <property type="match status" value="1"/>
</dbReference>
<dbReference type="Pfam" id="PF02673">
    <property type="entry name" value="BacA"/>
    <property type="match status" value="1"/>
</dbReference>
<evidence type="ECO:0000255" key="1">
    <source>
        <dbReference type="HAMAP-Rule" id="MF_01006"/>
    </source>
</evidence>
<sequence>MYLIEILKSIFFGIVEGITEWLPISSTGHLILAEEFIQYQNQNEAFMSMFNVVIQLGAILAVMVIYFNKLNPFKPTKDKQEVRKTWRLWLKVLIATLPLLGVFKFDDWFDTHFHNMVSVALMLIIYGVAFIYLEKRNKARAIEPSVTELDKLPYTTAFYIGLFQVLALLPGTSRSGATIVGGLLNGTSRSVVTEFTFYLGIPVMFGASALKIFKFVKAGELLSFGQLFLLLVAMGVAFAVSMVAIRFLTSYVKKHDFTLFGKYRIVLGSVLLLYSFVRLFV</sequence>
<comment type="function">
    <text evidence="1">Catalyzes the dephosphorylation of undecaprenyl diphosphate (UPP). Confers resistance to bacitracin.</text>
</comment>
<comment type="catalytic activity">
    <reaction evidence="1">
        <text>di-trans,octa-cis-undecaprenyl diphosphate + H2O = di-trans,octa-cis-undecaprenyl phosphate + phosphate + H(+)</text>
        <dbReference type="Rhea" id="RHEA:28094"/>
        <dbReference type="ChEBI" id="CHEBI:15377"/>
        <dbReference type="ChEBI" id="CHEBI:15378"/>
        <dbReference type="ChEBI" id="CHEBI:43474"/>
        <dbReference type="ChEBI" id="CHEBI:58405"/>
        <dbReference type="ChEBI" id="CHEBI:60392"/>
        <dbReference type="EC" id="3.6.1.27"/>
    </reaction>
</comment>
<comment type="subcellular location">
    <subcellularLocation>
        <location evidence="1">Cell membrane</location>
        <topology evidence="1">Multi-pass membrane protein</topology>
    </subcellularLocation>
</comment>
<comment type="miscellaneous">
    <text>Bacitracin is thought to be involved in the inhibition of peptidoglycan synthesis by sequestering undecaprenyl diphosphate, thereby reducing the pool of lipid carrier available.</text>
</comment>
<comment type="similarity">
    <text evidence="1">Belongs to the UppP family.</text>
</comment>
<proteinExistence type="inferred from homology"/>
<gene>
    <name evidence="1" type="primary">uppP</name>
    <name type="ordered locus">SPP_0489</name>
</gene>
<accession>C1CIV9</accession>
<name>UPPP_STRZP</name>
<keyword id="KW-0046">Antibiotic resistance</keyword>
<keyword id="KW-1003">Cell membrane</keyword>
<keyword id="KW-0133">Cell shape</keyword>
<keyword id="KW-0961">Cell wall biogenesis/degradation</keyword>
<keyword id="KW-0378">Hydrolase</keyword>
<keyword id="KW-0472">Membrane</keyword>
<keyword id="KW-0573">Peptidoglycan synthesis</keyword>
<keyword id="KW-0812">Transmembrane</keyword>
<keyword id="KW-1133">Transmembrane helix</keyword>
<protein>
    <recommendedName>
        <fullName evidence="1">Undecaprenyl-diphosphatase</fullName>
        <ecNumber evidence="1">3.6.1.27</ecNumber>
    </recommendedName>
    <alternativeName>
        <fullName evidence="1">Bacitracin resistance protein</fullName>
    </alternativeName>
    <alternativeName>
        <fullName evidence="1">Undecaprenyl pyrophosphate phosphatase</fullName>
    </alternativeName>
</protein>
<organism>
    <name type="scientific">Streptococcus pneumoniae (strain P1031)</name>
    <dbReference type="NCBI Taxonomy" id="488223"/>
    <lineage>
        <taxon>Bacteria</taxon>
        <taxon>Bacillati</taxon>
        <taxon>Bacillota</taxon>
        <taxon>Bacilli</taxon>
        <taxon>Lactobacillales</taxon>
        <taxon>Streptococcaceae</taxon>
        <taxon>Streptococcus</taxon>
    </lineage>
</organism>
<feature type="chain" id="PRO_1000148831" description="Undecaprenyl-diphosphatase">
    <location>
        <begin position="1"/>
        <end position="281"/>
    </location>
</feature>
<feature type="transmembrane region" description="Helical" evidence="1">
    <location>
        <begin position="4"/>
        <end position="24"/>
    </location>
</feature>
<feature type="transmembrane region" description="Helical" evidence="1">
    <location>
        <begin position="45"/>
        <end position="65"/>
    </location>
</feature>
<feature type="transmembrane region" description="Helical" evidence="1">
    <location>
        <begin position="89"/>
        <end position="109"/>
    </location>
</feature>
<feature type="transmembrane region" description="Helical" evidence="1">
    <location>
        <begin position="113"/>
        <end position="133"/>
    </location>
</feature>
<feature type="transmembrane region" description="Helical" evidence="1">
    <location>
        <begin position="152"/>
        <end position="172"/>
    </location>
</feature>
<feature type="transmembrane region" description="Helical" evidence="1">
    <location>
        <begin position="190"/>
        <end position="210"/>
    </location>
</feature>
<feature type="transmembrane region" description="Helical" evidence="1">
    <location>
        <begin position="225"/>
        <end position="245"/>
    </location>
</feature>
<feature type="transmembrane region" description="Helical" evidence="1">
    <location>
        <begin position="257"/>
        <end position="277"/>
    </location>
</feature>
<reference key="1">
    <citation type="journal article" date="2010" name="Genome Biol.">
        <title>Structure and dynamics of the pan-genome of Streptococcus pneumoniae and closely related species.</title>
        <authorList>
            <person name="Donati C."/>
            <person name="Hiller N.L."/>
            <person name="Tettelin H."/>
            <person name="Muzzi A."/>
            <person name="Croucher N.J."/>
            <person name="Angiuoli S.V."/>
            <person name="Oggioni M."/>
            <person name="Dunning Hotopp J.C."/>
            <person name="Hu F.Z."/>
            <person name="Riley D.R."/>
            <person name="Covacci A."/>
            <person name="Mitchell T.J."/>
            <person name="Bentley S.D."/>
            <person name="Kilian M."/>
            <person name="Ehrlich G.D."/>
            <person name="Rappuoli R."/>
            <person name="Moxon E.R."/>
            <person name="Masignani V."/>
        </authorList>
    </citation>
    <scope>NUCLEOTIDE SEQUENCE [LARGE SCALE GENOMIC DNA]</scope>
    <source>
        <strain>P1031</strain>
    </source>
</reference>